<keyword id="KW-0687">Ribonucleoprotein</keyword>
<keyword id="KW-0689">Ribosomal protein</keyword>
<reference key="1">
    <citation type="submission" date="2005-09" db="EMBL/GenBank/DDBJ databases">
        <title>Complete genome sequence of Clostridium kluyveri and comparative genomics of Clostridia species.</title>
        <authorList>
            <person name="Inui M."/>
            <person name="Nonaka H."/>
            <person name="Shinoda Y."/>
            <person name="Ikenaga Y."/>
            <person name="Abe M."/>
            <person name="Naito K."/>
            <person name="Vertes A.A."/>
            <person name="Yukawa H."/>
        </authorList>
    </citation>
    <scope>NUCLEOTIDE SEQUENCE [LARGE SCALE GENOMIC DNA]</scope>
    <source>
        <strain>NBRC 12016</strain>
    </source>
</reference>
<comment type="similarity">
    <text evidence="1">Belongs to the bacterial ribosomal protein bL36 family.</text>
</comment>
<protein>
    <recommendedName>
        <fullName evidence="1">Large ribosomal subunit protein bL36</fullName>
    </recommendedName>
    <alternativeName>
        <fullName evidence="2">50S ribosomal protein L36</fullName>
    </alternativeName>
</protein>
<gene>
    <name evidence="1" type="primary">rpmJ</name>
    <name type="ordered locus">CKR_0207</name>
</gene>
<evidence type="ECO:0000255" key="1">
    <source>
        <dbReference type="HAMAP-Rule" id="MF_00251"/>
    </source>
</evidence>
<evidence type="ECO:0000305" key="2"/>
<name>RL36_CLOK1</name>
<organism>
    <name type="scientific">Clostridium kluyveri (strain NBRC 12016)</name>
    <dbReference type="NCBI Taxonomy" id="583346"/>
    <lineage>
        <taxon>Bacteria</taxon>
        <taxon>Bacillati</taxon>
        <taxon>Bacillota</taxon>
        <taxon>Clostridia</taxon>
        <taxon>Eubacteriales</taxon>
        <taxon>Clostridiaceae</taxon>
        <taxon>Clostridium</taxon>
    </lineage>
</organism>
<dbReference type="EMBL" id="AP009049">
    <property type="protein sequence ID" value="BAH05258.1"/>
    <property type="molecule type" value="Genomic_DNA"/>
</dbReference>
<dbReference type="RefSeq" id="WP_011988827.1">
    <property type="nucleotide sequence ID" value="NC_011837.1"/>
</dbReference>
<dbReference type="SMR" id="B9DYD3"/>
<dbReference type="KEGG" id="ckr:CKR_0207"/>
<dbReference type="HOGENOM" id="CLU_135723_6_2_9"/>
<dbReference type="Proteomes" id="UP000007969">
    <property type="component" value="Chromosome"/>
</dbReference>
<dbReference type="GO" id="GO:0005737">
    <property type="term" value="C:cytoplasm"/>
    <property type="evidence" value="ECO:0007669"/>
    <property type="project" value="UniProtKB-ARBA"/>
</dbReference>
<dbReference type="GO" id="GO:1990904">
    <property type="term" value="C:ribonucleoprotein complex"/>
    <property type="evidence" value="ECO:0007669"/>
    <property type="project" value="UniProtKB-KW"/>
</dbReference>
<dbReference type="GO" id="GO:0005840">
    <property type="term" value="C:ribosome"/>
    <property type="evidence" value="ECO:0007669"/>
    <property type="project" value="UniProtKB-KW"/>
</dbReference>
<dbReference type="GO" id="GO:0003735">
    <property type="term" value="F:structural constituent of ribosome"/>
    <property type="evidence" value="ECO:0007669"/>
    <property type="project" value="InterPro"/>
</dbReference>
<dbReference type="GO" id="GO:0006412">
    <property type="term" value="P:translation"/>
    <property type="evidence" value="ECO:0007669"/>
    <property type="project" value="UniProtKB-UniRule"/>
</dbReference>
<dbReference type="HAMAP" id="MF_00251">
    <property type="entry name" value="Ribosomal_bL36"/>
    <property type="match status" value="1"/>
</dbReference>
<dbReference type="InterPro" id="IPR000473">
    <property type="entry name" value="Ribosomal_bL36"/>
</dbReference>
<dbReference type="InterPro" id="IPR035977">
    <property type="entry name" value="Ribosomal_bL36_sp"/>
</dbReference>
<dbReference type="NCBIfam" id="TIGR01022">
    <property type="entry name" value="rpmJ_bact"/>
    <property type="match status" value="1"/>
</dbReference>
<dbReference type="PANTHER" id="PTHR42888">
    <property type="entry name" value="50S RIBOSOMAL PROTEIN L36, CHLOROPLASTIC"/>
    <property type="match status" value="1"/>
</dbReference>
<dbReference type="PANTHER" id="PTHR42888:SF1">
    <property type="entry name" value="LARGE RIBOSOMAL SUBUNIT PROTEIN BL36C"/>
    <property type="match status" value="1"/>
</dbReference>
<dbReference type="Pfam" id="PF00444">
    <property type="entry name" value="Ribosomal_L36"/>
    <property type="match status" value="1"/>
</dbReference>
<dbReference type="SUPFAM" id="SSF57840">
    <property type="entry name" value="Ribosomal protein L36"/>
    <property type="match status" value="1"/>
</dbReference>
<dbReference type="PROSITE" id="PS00828">
    <property type="entry name" value="RIBOSOMAL_L36"/>
    <property type="match status" value="1"/>
</dbReference>
<accession>B9DYD3</accession>
<proteinExistence type="inferred from homology"/>
<sequence length="37" mass="4347">MKVRPSVKPICEKCKIIKRKGRVMVICENPRHKQKQG</sequence>
<feature type="chain" id="PRO_1000196180" description="Large ribosomal subunit protein bL36">
    <location>
        <begin position="1"/>
        <end position="37"/>
    </location>
</feature>